<organism>
    <name type="scientific">Kineococcus radiotolerans (strain ATCC BAA-149 / DSM 14245 / SRS30216)</name>
    <dbReference type="NCBI Taxonomy" id="266940"/>
    <lineage>
        <taxon>Bacteria</taxon>
        <taxon>Bacillati</taxon>
        <taxon>Actinomycetota</taxon>
        <taxon>Actinomycetes</taxon>
        <taxon>Kineosporiales</taxon>
        <taxon>Kineosporiaceae</taxon>
        <taxon>Kineococcus</taxon>
    </lineage>
</organism>
<protein>
    <recommendedName>
        <fullName evidence="1">Gamma-glutamyl phosphate reductase</fullName>
        <shortName evidence="1">GPR</shortName>
        <ecNumber evidence="1">1.2.1.41</ecNumber>
    </recommendedName>
    <alternativeName>
        <fullName evidence="1">Glutamate-5-semialdehyde dehydrogenase</fullName>
    </alternativeName>
    <alternativeName>
        <fullName evidence="1">Glutamyl-gamma-semialdehyde dehydrogenase</fullName>
        <shortName evidence="1">GSA dehydrogenase</shortName>
    </alternativeName>
</protein>
<gene>
    <name evidence="1" type="primary">proA</name>
    <name type="ordered locus">Krad_3452</name>
</gene>
<sequence length="432" mass="44569">MTLAPVQPAGTTVEEAVLAVCRRAKVASRPLRLASRATKDAALHAIADAIEAATERIVTANGEDLARGAADGTSPHLLDRLRLDPQRVAAVAAAVREVAALPDPVGEVVRGSTLPNGLRLRQLRVPMGVLGVVYEARPNVTVDVAVLALKSGNAVVLRGGSAAQSSNTVLVEVVRGALESVGLPADAVTSIDEHGRDGVGALLTARGLVDLLVPRGGADLIQRVVREATVPVIETGVGNCHVYVDASADLAQAVEIVLNAKTSRPSVCNAAETVLVHSALAADFLPTLLRALHEAGVVLHADATSLAAARAAGLPAQPVTDEDWAAEFHGLEIAVGVVDSVQDAVEHIARWTSAHTEAVLATDVRVTDYFCAAVDSAVVAVNASTRFTDGGEFGLGAEVGISTQKLHARGPMGLAELTTTTWQVLGDGHVRV</sequence>
<feature type="chain" id="PRO_0000340886" description="Gamma-glutamyl phosphate reductase">
    <location>
        <begin position="1"/>
        <end position="432"/>
    </location>
</feature>
<reference key="1">
    <citation type="journal article" date="2008" name="PLoS ONE">
        <title>Survival in nuclear waste, extreme resistance, and potential applications gleaned from the genome sequence of Kineococcus radiotolerans SRS30216.</title>
        <authorList>
            <person name="Bagwell C.E."/>
            <person name="Bhat S."/>
            <person name="Hawkins G.M."/>
            <person name="Smith B.W."/>
            <person name="Biswas T."/>
            <person name="Hoover T.R."/>
            <person name="Saunders E."/>
            <person name="Han C.S."/>
            <person name="Tsodikov O.V."/>
            <person name="Shimkets L.J."/>
        </authorList>
    </citation>
    <scope>NUCLEOTIDE SEQUENCE [LARGE SCALE GENOMIC DNA]</scope>
    <source>
        <strain>ATCC BAA-149 / DSM 14245 / SRS30216</strain>
    </source>
</reference>
<proteinExistence type="inferred from homology"/>
<dbReference type="EC" id="1.2.1.41" evidence="1"/>
<dbReference type="EMBL" id="CP000750">
    <property type="protein sequence ID" value="ABS04915.1"/>
    <property type="molecule type" value="Genomic_DNA"/>
</dbReference>
<dbReference type="RefSeq" id="WP_012086825.1">
    <property type="nucleotide sequence ID" value="NC_009664.2"/>
</dbReference>
<dbReference type="SMR" id="A6WDM6"/>
<dbReference type="STRING" id="266940.Krad_3452"/>
<dbReference type="KEGG" id="kra:Krad_3452"/>
<dbReference type="eggNOG" id="COG0014">
    <property type="taxonomic scope" value="Bacteria"/>
</dbReference>
<dbReference type="HOGENOM" id="CLU_030231_0_0_11"/>
<dbReference type="OrthoDB" id="9809970at2"/>
<dbReference type="UniPathway" id="UPA00098">
    <property type="reaction ID" value="UER00360"/>
</dbReference>
<dbReference type="Proteomes" id="UP000001116">
    <property type="component" value="Chromosome"/>
</dbReference>
<dbReference type="GO" id="GO:0005737">
    <property type="term" value="C:cytoplasm"/>
    <property type="evidence" value="ECO:0007669"/>
    <property type="project" value="UniProtKB-SubCell"/>
</dbReference>
<dbReference type="GO" id="GO:0004350">
    <property type="term" value="F:glutamate-5-semialdehyde dehydrogenase activity"/>
    <property type="evidence" value="ECO:0007669"/>
    <property type="project" value="UniProtKB-UniRule"/>
</dbReference>
<dbReference type="GO" id="GO:0050661">
    <property type="term" value="F:NADP binding"/>
    <property type="evidence" value="ECO:0007669"/>
    <property type="project" value="InterPro"/>
</dbReference>
<dbReference type="GO" id="GO:0055129">
    <property type="term" value="P:L-proline biosynthetic process"/>
    <property type="evidence" value="ECO:0007669"/>
    <property type="project" value="UniProtKB-UniRule"/>
</dbReference>
<dbReference type="CDD" id="cd07079">
    <property type="entry name" value="ALDH_F18-19_ProA-GPR"/>
    <property type="match status" value="1"/>
</dbReference>
<dbReference type="FunFam" id="3.40.309.10:FF:000006">
    <property type="entry name" value="Gamma-glutamyl phosphate reductase"/>
    <property type="match status" value="1"/>
</dbReference>
<dbReference type="Gene3D" id="3.40.605.10">
    <property type="entry name" value="Aldehyde Dehydrogenase, Chain A, domain 1"/>
    <property type="match status" value="1"/>
</dbReference>
<dbReference type="Gene3D" id="3.40.309.10">
    <property type="entry name" value="Aldehyde Dehydrogenase, Chain A, domain 2"/>
    <property type="match status" value="1"/>
</dbReference>
<dbReference type="HAMAP" id="MF_00412">
    <property type="entry name" value="ProA"/>
    <property type="match status" value="1"/>
</dbReference>
<dbReference type="InterPro" id="IPR016161">
    <property type="entry name" value="Ald_DH/histidinol_DH"/>
</dbReference>
<dbReference type="InterPro" id="IPR016163">
    <property type="entry name" value="Ald_DH_C"/>
</dbReference>
<dbReference type="InterPro" id="IPR016162">
    <property type="entry name" value="Ald_DH_N"/>
</dbReference>
<dbReference type="InterPro" id="IPR015590">
    <property type="entry name" value="Aldehyde_DH_dom"/>
</dbReference>
<dbReference type="InterPro" id="IPR012134">
    <property type="entry name" value="Glu-5-SA_DH"/>
</dbReference>
<dbReference type="InterPro" id="IPR000965">
    <property type="entry name" value="GPR_dom"/>
</dbReference>
<dbReference type="NCBIfam" id="NF001221">
    <property type="entry name" value="PRK00197.1"/>
    <property type="match status" value="1"/>
</dbReference>
<dbReference type="NCBIfam" id="TIGR00407">
    <property type="entry name" value="proA"/>
    <property type="match status" value="1"/>
</dbReference>
<dbReference type="PANTHER" id="PTHR11063:SF8">
    <property type="entry name" value="DELTA-1-PYRROLINE-5-CARBOXYLATE SYNTHASE"/>
    <property type="match status" value="1"/>
</dbReference>
<dbReference type="PANTHER" id="PTHR11063">
    <property type="entry name" value="GLUTAMATE SEMIALDEHYDE DEHYDROGENASE"/>
    <property type="match status" value="1"/>
</dbReference>
<dbReference type="Pfam" id="PF00171">
    <property type="entry name" value="Aldedh"/>
    <property type="match status" value="1"/>
</dbReference>
<dbReference type="PIRSF" id="PIRSF000151">
    <property type="entry name" value="GPR"/>
    <property type="match status" value="1"/>
</dbReference>
<dbReference type="SUPFAM" id="SSF53720">
    <property type="entry name" value="ALDH-like"/>
    <property type="match status" value="1"/>
</dbReference>
<name>PROA_KINRD</name>
<keyword id="KW-0028">Amino-acid biosynthesis</keyword>
<keyword id="KW-0963">Cytoplasm</keyword>
<keyword id="KW-0521">NADP</keyword>
<keyword id="KW-0560">Oxidoreductase</keyword>
<keyword id="KW-0641">Proline biosynthesis</keyword>
<keyword id="KW-1185">Reference proteome</keyword>
<evidence type="ECO:0000255" key="1">
    <source>
        <dbReference type="HAMAP-Rule" id="MF_00412"/>
    </source>
</evidence>
<comment type="function">
    <text evidence="1">Catalyzes the NADPH-dependent reduction of L-glutamate 5-phosphate into L-glutamate 5-semialdehyde and phosphate. The product spontaneously undergoes cyclization to form 1-pyrroline-5-carboxylate.</text>
</comment>
<comment type="catalytic activity">
    <reaction evidence="1">
        <text>L-glutamate 5-semialdehyde + phosphate + NADP(+) = L-glutamyl 5-phosphate + NADPH + H(+)</text>
        <dbReference type="Rhea" id="RHEA:19541"/>
        <dbReference type="ChEBI" id="CHEBI:15378"/>
        <dbReference type="ChEBI" id="CHEBI:43474"/>
        <dbReference type="ChEBI" id="CHEBI:57783"/>
        <dbReference type="ChEBI" id="CHEBI:58066"/>
        <dbReference type="ChEBI" id="CHEBI:58274"/>
        <dbReference type="ChEBI" id="CHEBI:58349"/>
        <dbReference type="EC" id="1.2.1.41"/>
    </reaction>
</comment>
<comment type="pathway">
    <text evidence="1">Amino-acid biosynthesis; L-proline biosynthesis; L-glutamate 5-semialdehyde from L-glutamate: step 2/2.</text>
</comment>
<comment type="subcellular location">
    <subcellularLocation>
        <location evidence="1">Cytoplasm</location>
    </subcellularLocation>
</comment>
<comment type="similarity">
    <text evidence="1">Belongs to the gamma-glutamyl phosphate reductase family.</text>
</comment>
<accession>A6WDM6</accession>